<evidence type="ECO:0000255" key="1">
    <source>
        <dbReference type="HAMAP-Rule" id="MF_00362"/>
    </source>
</evidence>
<evidence type="ECO:0000305" key="2"/>
<reference key="1">
    <citation type="journal article" date="2006" name="Proc. Natl. Acad. Sci. U.S.A.">
        <title>The complete genome sequence of Lactobacillus bulgaricus reveals extensive and ongoing reductive evolution.</title>
        <authorList>
            <person name="van de Guchte M."/>
            <person name="Penaud S."/>
            <person name="Grimaldi C."/>
            <person name="Barbe V."/>
            <person name="Bryson K."/>
            <person name="Nicolas P."/>
            <person name="Robert C."/>
            <person name="Oztas S."/>
            <person name="Mangenot S."/>
            <person name="Couloux A."/>
            <person name="Loux V."/>
            <person name="Dervyn R."/>
            <person name="Bossy R."/>
            <person name="Bolotin A."/>
            <person name="Batto J.-M."/>
            <person name="Walunas T."/>
            <person name="Gibrat J.-F."/>
            <person name="Bessieres P."/>
            <person name="Weissenbach J."/>
            <person name="Ehrlich S.D."/>
            <person name="Maguin E."/>
        </authorList>
    </citation>
    <scope>NUCLEOTIDE SEQUENCE [LARGE SCALE GENOMIC DNA]</scope>
    <source>
        <strain>ATCC 11842 / DSM 20081 / BCRC 10696 / JCM 1002 / NBRC 13953 / NCIMB 11778 / NCTC 12712 / WDCM 00102 / Lb 14</strain>
    </source>
</reference>
<proteinExistence type="inferred from homology"/>
<protein>
    <recommendedName>
        <fullName evidence="1">Large ribosomal subunit protein uL10</fullName>
    </recommendedName>
    <alternativeName>
        <fullName evidence="2">50S ribosomal protein L10</fullName>
    </alternativeName>
</protein>
<gene>
    <name evidence="1" type="primary">rplJ</name>
    <name type="ordered locus">Ldb1658</name>
</gene>
<feature type="chain" id="PRO_1000005518" description="Large ribosomal subunit protein uL10">
    <location>
        <begin position="1"/>
        <end position="169"/>
    </location>
</feature>
<sequence>MSQAIIAAKAKFVEEFAEELKSAKSIVVINYLGLTVDQVTAFRAELRESNAKMKVVKNTYLRRAAAQAGLDDLAPVFVGPSAVIYTDDEDNVTAPARIAADYAKKFDVVEIKGGALEGQVATKEQVEELAAIPGREGLLSMLLSVLQAPVRNFAYVVKAVAESKEESAE</sequence>
<accession>Q1G904</accession>
<keyword id="KW-1185">Reference proteome</keyword>
<keyword id="KW-0687">Ribonucleoprotein</keyword>
<keyword id="KW-0689">Ribosomal protein</keyword>
<keyword id="KW-0694">RNA-binding</keyword>
<keyword id="KW-0699">rRNA-binding</keyword>
<name>RL10_LACDA</name>
<comment type="function">
    <text evidence="1">Forms part of the ribosomal stalk, playing a central role in the interaction of the ribosome with GTP-bound translation factors.</text>
</comment>
<comment type="subunit">
    <text evidence="1">Part of the ribosomal stalk of the 50S ribosomal subunit. The N-terminus interacts with L11 and the large rRNA to form the base of the stalk. The C-terminus forms an elongated spine to which L12 dimers bind in a sequential fashion forming a multimeric L10(L12)X complex.</text>
</comment>
<comment type="similarity">
    <text evidence="1">Belongs to the universal ribosomal protein uL10 family.</text>
</comment>
<dbReference type="EMBL" id="CR954253">
    <property type="protein sequence ID" value="CAI98447.1"/>
    <property type="molecule type" value="Genomic_DNA"/>
</dbReference>
<dbReference type="RefSeq" id="WP_003621925.1">
    <property type="nucleotide sequence ID" value="NZ_JQAV01000002.1"/>
</dbReference>
<dbReference type="SMR" id="Q1G904"/>
<dbReference type="STRING" id="390333.Ldb1658"/>
<dbReference type="KEGG" id="ldb:Ldb1658"/>
<dbReference type="PATRIC" id="fig|390333.13.peg.966"/>
<dbReference type="eggNOG" id="COG0244">
    <property type="taxonomic scope" value="Bacteria"/>
</dbReference>
<dbReference type="HOGENOM" id="CLU_092227_2_0_9"/>
<dbReference type="BioCyc" id="LDEL390333:LDB_RS07165-MONOMER"/>
<dbReference type="Proteomes" id="UP000001259">
    <property type="component" value="Chromosome"/>
</dbReference>
<dbReference type="GO" id="GO:0015934">
    <property type="term" value="C:large ribosomal subunit"/>
    <property type="evidence" value="ECO:0007669"/>
    <property type="project" value="InterPro"/>
</dbReference>
<dbReference type="GO" id="GO:0070180">
    <property type="term" value="F:large ribosomal subunit rRNA binding"/>
    <property type="evidence" value="ECO:0007669"/>
    <property type="project" value="UniProtKB-UniRule"/>
</dbReference>
<dbReference type="GO" id="GO:0003735">
    <property type="term" value="F:structural constituent of ribosome"/>
    <property type="evidence" value="ECO:0007669"/>
    <property type="project" value="InterPro"/>
</dbReference>
<dbReference type="GO" id="GO:0006412">
    <property type="term" value="P:translation"/>
    <property type="evidence" value="ECO:0007669"/>
    <property type="project" value="UniProtKB-UniRule"/>
</dbReference>
<dbReference type="CDD" id="cd05797">
    <property type="entry name" value="Ribosomal_L10"/>
    <property type="match status" value="1"/>
</dbReference>
<dbReference type="Gene3D" id="3.30.70.1730">
    <property type="match status" value="1"/>
</dbReference>
<dbReference type="Gene3D" id="6.10.250.290">
    <property type="match status" value="1"/>
</dbReference>
<dbReference type="HAMAP" id="MF_00362">
    <property type="entry name" value="Ribosomal_uL10"/>
    <property type="match status" value="1"/>
</dbReference>
<dbReference type="InterPro" id="IPR001790">
    <property type="entry name" value="Ribosomal_uL10"/>
</dbReference>
<dbReference type="InterPro" id="IPR043141">
    <property type="entry name" value="Ribosomal_uL10-like_sf"/>
</dbReference>
<dbReference type="InterPro" id="IPR022973">
    <property type="entry name" value="Ribosomal_uL10_bac"/>
</dbReference>
<dbReference type="InterPro" id="IPR047865">
    <property type="entry name" value="Ribosomal_uL10_bac_type"/>
</dbReference>
<dbReference type="InterPro" id="IPR002363">
    <property type="entry name" value="Ribosomal_uL10_CS_bac"/>
</dbReference>
<dbReference type="NCBIfam" id="NF000955">
    <property type="entry name" value="PRK00099.1-1"/>
    <property type="match status" value="1"/>
</dbReference>
<dbReference type="PANTHER" id="PTHR11560">
    <property type="entry name" value="39S RIBOSOMAL PROTEIN L10, MITOCHONDRIAL"/>
    <property type="match status" value="1"/>
</dbReference>
<dbReference type="Pfam" id="PF00466">
    <property type="entry name" value="Ribosomal_L10"/>
    <property type="match status" value="1"/>
</dbReference>
<dbReference type="SUPFAM" id="SSF160369">
    <property type="entry name" value="Ribosomal protein L10-like"/>
    <property type="match status" value="1"/>
</dbReference>
<dbReference type="PROSITE" id="PS01109">
    <property type="entry name" value="RIBOSOMAL_L10"/>
    <property type="match status" value="1"/>
</dbReference>
<organism>
    <name type="scientific">Lactobacillus delbrueckii subsp. bulgaricus (strain ATCC 11842 / DSM 20081 / BCRC 10696 / JCM 1002 / NBRC 13953 / NCIMB 11778 / NCTC 12712 / WDCM 00102 / Lb 14)</name>
    <dbReference type="NCBI Taxonomy" id="390333"/>
    <lineage>
        <taxon>Bacteria</taxon>
        <taxon>Bacillati</taxon>
        <taxon>Bacillota</taxon>
        <taxon>Bacilli</taxon>
        <taxon>Lactobacillales</taxon>
        <taxon>Lactobacillaceae</taxon>
        <taxon>Lactobacillus</taxon>
    </lineage>
</organism>